<sequence length="207" mass="22111">MANVKLFDQTGKEVSSVELNDAVFGIEPNESVVFDVVISQRASLRQGTHAVKNRSAVSGGGRKPWRQKGTGRARQGSIRSPQWRGGGVVFGPTPRSYGYKLPQKVRRLALKSVYSAKVAEDKFVAVEGLSFAAPKTAEFAKVLSALSIDTKVLVLVEEGNEFAALSARNLPNVTVATAATASVLDIVNADKLLVTKEAISTIEEVLA</sequence>
<protein>
    <recommendedName>
        <fullName evidence="1">Large ribosomal subunit protein uL4</fullName>
    </recommendedName>
    <alternativeName>
        <fullName evidence="3">50S ribosomal protein L4</fullName>
    </alternativeName>
</protein>
<accession>B5XJ37</accession>
<comment type="function">
    <text evidence="1">One of the primary rRNA binding proteins, this protein initially binds near the 5'-end of the 23S rRNA. It is important during the early stages of 50S assembly. It makes multiple contacts with different domains of the 23S rRNA in the assembled 50S subunit and ribosome.</text>
</comment>
<comment type="function">
    <text evidence="1">Forms part of the polypeptide exit tunnel.</text>
</comment>
<comment type="subunit">
    <text evidence="1">Part of the 50S ribosomal subunit.</text>
</comment>
<comment type="similarity">
    <text evidence="1">Belongs to the universal ribosomal protein uL4 family.</text>
</comment>
<keyword id="KW-0687">Ribonucleoprotein</keyword>
<keyword id="KW-0689">Ribosomal protein</keyword>
<keyword id="KW-0694">RNA-binding</keyword>
<keyword id="KW-0699">rRNA-binding</keyword>
<dbReference type="EMBL" id="CP000829">
    <property type="protein sequence ID" value="ACI60405.1"/>
    <property type="molecule type" value="Genomic_DNA"/>
</dbReference>
<dbReference type="SMR" id="B5XJ37"/>
<dbReference type="KEGG" id="soz:Spy49_0046"/>
<dbReference type="HOGENOM" id="CLU_041575_5_2_9"/>
<dbReference type="Proteomes" id="UP000001039">
    <property type="component" value="Chromosome"/>
</dbReference>
<dbReference type="GO" id="GO:1990904">
    <property type="term" value="C:ribonucleoprotein complex"/>
    <property type="evidence" value="ECO:0007669"/>
    <property type="project" value="UniProtKB-KW"/>
</dbReference>
<dbReference type="GO" id="GO:0005840">
    <property type="term" value="C:ribosome"/>
    <property type="evidence" value="ECO:0007669"/>
    <property type="project" value="UniProtKB-KW"/>
</dbReference>
<dbReference type="GO" id="GO:0019843">
    <property type="term" value="F:rRNA binding"/>
    <property type="evidence" value="ECO:0007669"/>
    <property type="project" value="UniProtKB-UniRule"/>
</dbReference>
<dbReference type="GO" id="GO:0003735">
    <property type="term" value="F:structural constituent of ribosome"/>
    <property type="evidence" value="ECO:0007669"/>
    <property type="project" value="InterPro"/>
</dbReference>
<dbReference type="GO" id="GO:0006412">
    <property type="term" value="P:translation"/>
    <property type="evidence" value="ECO:0007669"/>
    <property type="project" value="UniProtKB-UniRule"/>
</dbReference>
<dbReference type="FunFam" id="3.40.1370.10:FF:000003">
    <property type="entry name" value="50S ribosomal protein L4"/>
    <property type="match status" value="1"/>
</dbReference>
<dbReference type="Gene3D" id="3.40.1370.10">
    <property type="match status" value="1"/>
</dbReference>
<dbReference type="HAMAP" id="MF_01328_B">
    <property type="entry name" value="Ribosomal_uL4_B"/>
    <property type="match status" value="1"/>
</dbReference>
<dbReference type="InterPro" id="IPR002136">
    <property type="entry name" value="Ribosomal_uL4"/>
</dbReference>
<dbReference type="InterPro" id="IPR013005">
    <property type="entry name" value="Ribosomal_uL4-like"/>
</dbReference>
<dbReference type="InterPro" id="IPR023574">
    <property type="entry name" value="Ribosomal_uL4_dom_sf"/>
</dbReference>
<dbReference type="NCBIfam" id="TIGR03953">
    <property type="entry name" value="rplD_bact"/>
    <property type="match status" value="1"/>
</dbReference>
<dbReference type="PANTHER" id="PTHR10746">
    <property type="entry name" value="50S RIBOSOMAL PROTEIN L4"/>
    <property type="match status" value="1"/>
</dbReference>
<dbReference type="PANTHER" id="PTHR10746:SF6">
    <property type="entry name" value="LARGE RIBOSOMAL SUBUNIT PROTEIN UL4M"/>
    <property type="match status" value="1"/>
</dbReference>
<dbReference type="Pfam" id="PF00573">
    <property type="entry name" value="Ribosomal_L4"/>
    <property type="match status" value="1"/>
</dbReference>
<dbReference type="SUPFAM" id="SSF52166">
    <property type="entry name" value="Ribosomal protein L4"/>
    <property type="match status" value="1"/>
</dbReference>
<evidence type="ECO:0000255" key="1">
    <source>
        <dbReference type="HAMAP-Rule" id="MF_01328"/>
    </source>
</evidence>
<evidence type="ECO:0000256" key="2">
    <source>
        <dbReference type="SAM" id="MobiDB-lite"/>
    </source>
</evidence>
<evidence type="ECO:0000305" key="3"/>
<name>RL4_STRPZ</name>
<organism>
    <name type="scientific">Streptococcus pyogenes serotype M49 (strain NZ131)</name>
    <dbReference type="NCBI Taxonomy" id="471876"/>
    <lineage>
        <taxon>Bacteria</taxon>
        <taxon>Bacillati</taxon>
        <taxon>Bacillota</taxon>
        <taxon>Bacilli</taxon>
        <taxon>Lactobacillales</taxon>
        <taxon>Streptococcaceae</taxon>
        <taxon>Streptococcus</taxon>
    </lineage>
</organism>
<feature type="chain" id="PRO_1000142195" description="Large ribosomal subunit protein uL4">
    <location>
        <begin position="1"/>
        <end position="207"/>
    </location>
</feature>
<feature type="region of interest" description="Disordered" evidence="2">
    <location>
        <begin position="49"/>
        <end position="78"/>
    </location>
</feature>
<proteinExistence type="inferred from homology"/>
<gene>
    <name evidence="1" type="primary">rplD</name>
    <name type="ordered locus">Spy49_0046</name>
</gene>
<reference key="1">
    <citation type="journal article" date="2008" name="J. Bacteriol.">
        <title>Genome sequence of a nephritogenic and highly transformable M49 strain of Streptococcus pyogenes.</title>
        <authorList>
            <person name="McShan W.M."/>
            <person name="Ferretti J.J."/>
            <person name="Karasawa T."/>
            <person name="Suvorov A.N."/>
            <person name="Lin S."/>
            <person name="Qin B."/>
            <person name="Jia H."/>
            <person name="Kenton S."/>
            <person name="Najar F."/>
            <person name="Wu H."/>
            <person name="Scott J."/>
            <person name="Roe B.A."/>
            <person name="Savic D.J."/>
        </authorList>
    </citation>
    <scope>NUCLEOTIDE SEQUENCE [LARGE SCALE GENOMIC DNA]</scope>
    <source>
        <strain>NZ131</strain>
    </source>
</reference>